<evidence type="ECO:0000255" key="1">
    <source>
        <dbReference type="HAMAP-Rule" id="MF_00146"/>
    </source>
</evidence>
<comment type="function">
    <text evidence="1">Catalyzes the deamination of dCTP to dUTP.</text>
</comment>
<comment type="catalytic activity">
    <reaction evidence="1">
        <text>dCTP + H2O + H(+) = dUTP + NH4(+)</text>
        <dbReference type="Rhea" id="RHEA:22680"/>
        <dbReference type="ChEBI" id="CHEBI:15377"/>
        <dbReference type="ChEBI" id="CHEBI:15378"/>
        <dbReference type="ChEBI" id="CHEBI:28938"/>
        <dbReference type="ChEBI" id="CHEBI:61481"/>
        <dbReference type="ChEBI" id="CHEBI:61555"/>
        <dbReference type="EC" id="3.5.4.13"/>
    </reaction>
</comment>
<comment type="pathway">
    <text evidence="1">Pyrimidine metabolism; dUMP biosynthesis; dUMP from dCTP (dUTP route): step 1/2.</text>
</comment>
<comment type="subunit">
    <text evidence="1">Homotrimer.</text>
</comment>
<comment type="similarity">
    <text evidence="1">Belongs to the dCTP deaminase family.</text>
</comment>
<sequence length="188" mass="21294">MSIKSDKWIRRMSEEFGMIDPFEPNQIKEADGKRIISYGTSSYGYDIRCANEFKIFTNINSTIVDPKNFDPKNFVTVEDDCCIIPPNSFALARTVEYFRIPRNVLTVCLGKSTYARCGIIVNVTPFEPEWEGYVTLEFSNTTPLPAKIYAGEGVAQVLFFESDEICKTSYKDRNGKYMGQTGVTLPKA</sequence>
<name>DCD_NEIMF</name>
<dbReference type="EC" id="3.5.4.13" evidence="1"/>
<dbReference type="EMBL" id="AM421808">
    <property type="protein sequence ID" value="CAM10073.1"/>
    <property type="molecule type" value="Genomic_DNA"/>
</dbReference>
<dbReference type="RefSeq" id="WP_002219476.1">
    <property type="nucleotide sequence ID" value="NC_008767.1"/>
</dbReference>
<dbReference type="SMR" id="A1KT90"/>
<dbReference type="KEGG" id="nmc:NMC0789"/>
<dbReference type="HOGENOM" id="CLU_087476_4_0_4"/>
<dbReference type="UniPathway" id="UPA00610">
    <property type="reaction ID" value="UER00665"/>
</dbReference>
<dbReference type="Proteomes" id="UP000002286">
    <property type="component" value="Chromosome"/>
</dbReference>
<dbReference type="GO" id="GO:0008829">
    <property type="term" value="F:dCTP deaminase activity"/>
    <property type="evidence" value="ECO:0007669"/>
    <property type="project" value="UniProtKB-UniRule"/>
</dbReference>
<dbReference type="GO" id="GO:0000166">
    <property type="term" value="F:nucleotide binding"/>
    <property type="evidence" value="ECO:0007669"/>
    <property type="project" value="UniProtKB-KW"/>
</dbReference>
<dbReference type="GO" id="GO:0006226">
    <property type="term" value="P:dUMP biosynthetic process"/>
    <property type="evidence" value="ECO:0007669"/>
    <property type="project" value="UniProtKB-UniPathway"/>
</dbReference>
<dbReference type="GO" id="GO:0006229">
    <property type="term" value="P:dUTP biosynthetic process"/>
    <property type="evidence" value="ECO:0007669"/>
    <property type="project" value="UniProtKB-UniRule"/>
</dbReference>
<dbReference type="GO" id="GO:0015949">
    <property type="term" value="P:nucleobase-containing small molecule interconversion"/>
    <property type="evidence" value="ECO:0007669"/>
    <property type="project" value="TreeGrafter"/>
</dbReference>
<dbReference type="CDD" id="cd07557">
    <property type="entry name" value="trimeric_dUTPase"/>
    <property type="match status" value="1"/>
</dbReference>
<dbReference type="FunFam" id="2.70.40.10:FF:000001">
    <property type="entry name" value="dCTP deaminase"/>
    <property type="match status" value="1"/>
</dbReference>
<dbReference type="Gene3D" id="2.70.40.10">
    <property type="match status" value="1"/>
</dbReference>
<dbReference type="HAMAP" id="MF_00146">
    <property type="entry name" value="dCTP_deaminase"/>
    <property type="match status" value="1"/>
</dbReference>
<dbReference type="InterPro" id="IPR011962">
    <property type="entry name" value="dCTP_deaminase"/>
</dbReference>
<dbReference type="InterPro" id="IPR036157">
    <property type="entry name" value="dUTPase-like_sf"/>
</dbReference>
<dbReference type="InterPro" id="IPR033704">
    <property type="entry name" value="dUTPase_trimeric"/>
</dbReference>
<dbReference type="NCBIfam" id="TIGR02274">
    <property type="entry name" value="dCTP_deam"/>
    <property type="match status" value="1"/>
</dbReference>
<dbReference type="PANTHER" id="PTHR42680">
    <property type="entry name" value="DCTP DEAMINASE"/>
    <property type="match status" value="1"/>
</dbReference>
<dbReference type="PANTHER" id="PTHR42680:SF3">
    <property type="entry name" value="DCTP DEAMINASE"/>
    <property type="match status" value="1"/>
</dbReference>
<dbReference type="Pfam" id="PF22769">
    <property type="entry name" value="DCD"/>
    <property type="match status" value="1"/>
</dbReference>
<dbReference type="SUPFAM" id="SSF51283">
    <property type="entry name" value="dUTPase-like"/>
    <property type="match status" value="1"/>
</dbReference>
<accession>A1KT90</accession>
<organism>
    <name type="scientific">Neisseria meningitidis serogroup C / serotype 2a (strain ATCC 700532 / DSM 15464 / FAM18)</name>
    <dbReference type="NCBI Taxonomy" id="272831"/>
    <lineage>
        <taxon>Bacteria</taxon>
        <taxon>Pseudomonadati</taxon>
        <taxon>Pseudomonadota</taxon>
        <taxon>Betaproteobacteria</taxon>
        <taxon>Neisseriales</taxon>
        <taxon>Neisseriaceae</taxon>
        <taxon>Neisseria</taxon>
    </lineage>
</organism>
<reference key="1">
    <citation type="journal article" date="2007" name="PLoS Genet.">
        <title>Meningococcal genetic variation mechanisms viewed through comparative analysis of serogroup C strain FAM18.</title>
        <authorList>
            <person name="Bentley S.D."/>
            <person name="Vernikos G.S."/>
            <person name="Snyder L.A.S."/>
            <person name="Churcher C."/>
            <person name="Arrowsmith C."/>
            <person name="Chillingworth T."/>
            <person name="Cronin A."/>
            <person name="Davis P.H."/>
            <person name="Holroyd N.E."/>
            <person name="Jagels K."/>
            <person name="Maddison M."/>
            <person name="Moule S."/>
            <person name="Rabbinowitsch E."/>
            <person name="Sharp S."/>
            <person name="Unwin L."/>
            <person name="Whitehead S."/>
            <person name="Quail M.A."/>
            <person name="Achtman M."/>
            <person name="Barrell B.G."/>
            <person name="Saunders N.J."/>
            <person name="Parkhill J."/>
        </authorList>
    </citation>
    <scope>NUCLEOTIDE SEQUENCE [LARGE SCALE GENOMIC DNA]</scope>
    <source>
        <strain>ATCC 700532 / DSM 15464 / FAM18</strain>
    </source>
</reference>
<keyword id="KW-0378">Hydrolase</keyword>
<keyword id="KW-0546">Nucleotide metabolism</keyword>
<keyword id="KW-0547">Nucleotide-binding</keyword>
<proteinExistence type="inferred from homology"/>
<feature type="chain" id="PRO_1000009768" description="dCTP deaminase">
    <location>
        <begin position="1"/>
        <end position="188"/>
    </location>
</feature>
<feature type="active site" description="Proton donor/acceptor" evidence="1">
    <location>
        <position position="137"/>
    </location>
</feature>
<feature type="binding site" evidence="1">
    <location>
        <begin position="111"/>
        <end position="116"/>
    </location>
    <ligand>
        <name>dCTP</name>
        <dbReference type="ChEBI" id="CHEBI:61481"/>
    </ligand>
</feature>
<feature type="binding site" evidence="1">
    <location>
        <begin position="135"/>
        <end position="137"/>
    </location>
    <ligand>
        <name>dCTP</name>
        <dbReference type="ChEBI" id="CHEBI:61481"/>
    </ligand>
</feature>
<feature type="binding site" evidence="1">
    <location>
        <position position="156"/>
    </location>
    <ligand>
        <name>dCTP</name>
        <dbReference type="ChEBI" id="CHEBI:61481"/>
    </ligand>
</feature>
<feature type="binding site" evidence="1">
    <location>
        <position position="170"/>
    </location>
    <ligand>
        <name>dCTP</name>
        <dbReference type="ChEBI" id="CHEBI:61481"/>
    </ligand>
</feature>
<feature type="binding site" evidence="1">
    <location>
        <position position="180"/>
    </location>
    <ligand>
        <name>dCTP</name>
        <dbReference type="ChEBI" id="CHEBI:61481"/>
    </ligand>
</feature>
<protein>
    <recommendedName>
        <fullName evidence="1">dCTP deaminase</fullName>
        <ecNumber evidence="1">3.5.4.13</ecNumber>
    </recommendedName>
    <alternativeName>
        <fullName evidence="1">Deoxycytidine triphosphate deaminase</fullName>
    </alternativeName>
</protein>
<gene>
    <name evidence="1" type="primary">dcd</name>
    <name type="ordered locus">NMC0789</name>
</gene>